<sequence length="317" mass="34836">MSTQYLNSNLKVFSLNSNKELAEQIAKHIGVGLGKCSVDRFSDGEVQINIEESIRGCDVFIIQSTSFPVNEHIMELLIMIDALKRASAKTINIVIPYYGYARQDRKARSREPITSKLVANLLETAGATRVITLDLHAPQIQGFFDIPIDHLMGVPILSDYFETKGLKDIVIVSPDHGGVTRARKMADRLKAPIAIIDKRRPRPNVSEVMNIIGNIEGKTAILIDDIIDTAGTITLAANALVENGASEVYACCTHPVLSGPAIERIQNSNIKELVVTNSIVLPEEKKIDKVHELSVAPLIGEAIIRVYEEESVSVLFN</sequence>
<proteinExistence type="inferred from homology"/>
<gene>
    <name evidence="1" type="primary">prs</name>
    <name type="ordered locus">BA_0049</name>
    <name type="ordered locus">GBAA_0049</name>
    <name type="ordered locus">BAS0049</name>
</gene>
<organism>
    <name type="scientific">Bacillus anthracis</name>
    <dbReference type="NCBI Taxonomy" id="1392"/>
    <lineage>
        <taxon>Bacteria</taxon>
        <taxon>Bacillati</taxon>
        <taxon>Bacillota</taxon>
        <taxon>Bacilli</taxon>
        <taxon>Bacillales</taxon>
        <taxon>Bacillaceae</taxon>
        <taxon>Bacillus</taxon>
        <taxon>Bacillus cereus group</taxon>
    </lineage>
</organism>
<reference key="1">
    <citation type="journal article" date="2003" name="Nature">
        <title>The genome sequence of Bacillus anthracis Ames and comparison to closely related bacteria.</title>
        <authorList>
            <person name="Read T.D."/>
            <person name="Peterson S.N."/>
            <person name="Tourasse N.J."/>
            <person name="Baillie L.W."/>
            <person name="Paulsen I.T."/>
            <person name="Nelson K.E."/>
            <person name="Tettelin H."/>
            <person name="Fouts D.E."/>
            <person name="Eisen J.A."/>
            <person name="Gill S.R."/>
            <person name="Holtzapple E.K."/>
            <person name="Okstad O.A."/>
            <person name="Helgason E."/>
            <person name="Rilstone J."/>
            <person name="Wu M."/>
            <person name="Kolonay J.F."/>
            <person name="Beanan M.J."/>
            <person name="Dodson R.J."/>
            <person name="Brinkac L.M."/>
            <person name="Gwinn M.L."/>
            <person name="DeBoy R.T."/>
            <person name="Madpu R."/>
            <person name="Daugherty S.C."/>
            <person name="Durkin A.S."/>
            <person name="Haft D.H."/>
            <person name="Nelson W.C."/>
            <person name="Peterson J.D."/>
            <person name="Pop M."/>
            <person name="Khouri H.M."/>
            <person name="Radune D."/>
            <person name="Benton J.L."/>
            <person name="Mahamoud Y."/>
            <person name="Jiang L."/>
            <person name="Hance I.R."/>
            <person name="Weidman J.F."/>
            <person name="Berry K.J."/>
            <person name="Plaut R.D."/>
            <person name="Wolf A.M."/>
            <person name="Watkins K.L."/>
            <person name="Nierman W.C."/>
            <person name="Hazen A."/>
            <person name="Cline R.T."/>
            <person name="Redmond C."/>
            <person name="Thwaite J.E."/>
            <person name="White O."/>
            <person name="Salzberg S.L."/>
            <person name="Thomason B."/>
            <person name="Friedlander A.M."/>
            <person name="Koehler T.M."/>
            <person name="Hanna P.C."/>
            <person name="Kolstoe A.-B."/>
            <person name="Fraser C.M."/>
        </authorList>
    </citation>
    <scope>NUCLEOTIDE SEQUENCE [LARGE SCALE GENOMIC DNA]</scope>
    <source>
        <strain>Ames / isolate Porton</strain>
    </source>
</reference>
<reference key="2">
    <citation type="journal article" date="2009" name="J. Bacteriol.">
        <title>The complete genome sequence of Bacillus anthracis Ames 'Ancestor'.</title>
        <authorList>
            <person name="Ravel J."/>
            <person name="Jiang L."/>
            <person name="Stanley S.T."/>
            <person name="Wilson M.R."/>
            <person name="Decker R.S."/>
            <person name="Read T.D."/>
            <person name="Worsham P."/>
            <person name="Keim P.S."/>
            <person name="Salzberg S.L."/>
            <person name="Fraser-Liggett C.M."/>
            <person name="Rasko D.A."/>
        </authorList>
    </citation>
    <scope>NUCLEOTIDE SEQUENCE [LARGE SCALE GENOMIC DNA]</scope>
    <source>
        <strain>Ames ancestor</strain>
    </source>
</reference>
<reference key="3">
    <citation type="submission" date="2004-01" db="EMBL/GenBank/DDBJ databases">
        <title>Complete genome sequence of Bacillus anthracis Sterne.</title>
        <authorList>
            <person name="Brettin T.S."/>
            <person name="Bruce D."/>
            <person name="Challacombe J.F."/>
            <person name="Gilna P."/>
            <person name="Han C."/>
            <person name="Hill K."/>
            <person name="Hitchcock P."/>
            <person name="Jackson P."/>
            <person name="Keim P."/>
            <person name="Longmire J."/>
            <person name="Lucas S."/>
            <person name="Okinaka R."/>
            <person name="Richardson P."/>
            <person name="Rubin E."/>
            <person name="Tice H."/>
        </authorList>
    </citation>
    <scope>NUCLEOTIDE SEQUENCE [LARGE SCALE GENOMIC DNA]</scope>
    <source>
        <strain>Sterne</strain>
    </source>
</reference>
<feature type="chain" id="PRO_0000141106" description="Ribose-phosphate pyrophosphokinase">
    <location>
        <begin position="1"/>
        <end position="317"/>
    </location>
</feature>
<feature type="active site" evidence="1">
    <location>
        <position position="198"/>
    </location>
</feature>
<feature type="binding site" evidence="1">
    <location>
        <begin position="43"/>
        <end position="45"/>
    </location>
    <ligand>
        <name>ATP</name>
        <dbReference type="ChEBI" id="CHEBI:30616"/>
    </ligand>
</feature>
<feature type="binding site" evidence="1">
    <location>
        <begin position="102"/>
        <end position="103"/>
    </location>
    <ligand>
        <name>ATP</name>
        <dbReference type="ChEBI" id="CHEBI:30616"/>
    </ligand>
</feature>
<feature type="binding site" evidence="1">
    <location>
        <position position="136"/>
    </location>
    <ligand>
        <name>Mg(2+)</name>
        <dbReference type="ChEBI" id="CHEBI:18420"/>
        <label>1</label>
    </ligand>
</feature>
<feature type="binding site" evidence="1">
    <location>
        <position position="175"/>
    </location>
    <ligand>
        <name>Mg(2+)</name>
        <dbReference type="ChEBI" id="CHEBI:18420"/>
        <label>2</label>
    </ligand>
</feature>
<feature type="binding site" evidence="1">
    <location>
        <position position="200"/>
    </location>
    <ligand>
        <name>D-ribose 5-phosphate</name>
        <dbReference type="ChEBI" id="CHEBI:78346"/>
    </ligand>
</feature>
<feature type="binding site" evidence="1">
    <location>
        <position position="224"/>
    </location>
    <ligand>
        <name>D-ribose 5-phosphate</name>
        <dbReference type="ChEBI" id="CHEBI:78346"/>
    </ligand>
</feature>
<feature type="binding site" evidence="1">
    <location>
        <begin position="228"/>
        <end position="232"/>
    </location>
    <ligand>
        <name>D-ribose 5-phosphate</name>
        <dbReference type="ChEBI" id="CHEBI:78346"/>
    </ligand>
</feature>
<keyword id="KW-0067">ATP-binding</keyword>
<keyword id="KW-0963">Cytoplasm</keyword>
<keyword id="KW-0418">Kinase</keyword>
<keyword id="KW-0460">Magnesium</keyword>
<keyword id="KW-0479">Metal-binding</keyword>
<keyword id="KW-0545">Nucleotide biosynthesis</keyword>
<keyword id="KW-0547">Nucleotide-binding</keyword>
<keyword id="KW-1185">Reference proteome</keyword>
<keyword id="KW-0808">Transferase</keyword>
<protein>
    <recommendedName>
        <fullName evidence="1">Ribose-phosphate pyrophosphokinase</fullName>
        <shortName evidence="1">RPPK</shortName>
        <ecNumber evidence="1">2.7.6.1</ecNumber>
    </recommendedName>
    <alternativeName>
        <fullName evidence="1">5-phospho-D-ribosyl alpha-1-diphosphate synthase</fullName>
    </alternativeName>
    <alternativeName>
        <fullName evidence="1">Phosphoribosyl diphosphate synthase</fullName>
    </alternativeName>
    <alternativeName>
        <fullName evidence="1">Phosphoribosyl pyrophosphate synthase</fullName>
        <shortName evidence="1">P-Rib-PP synthase</shortName>
        <shortName evidence="1">PRPP synthase</shortName>
        <shortName evidence="1">PRPPase</shortName>
    </alternativeName>
</protein>
<accession>Q81VZ0</accession>
<accession>Q6I4Z4</accession>
<accession>Q6KYN8</accession>
<evidence type="ECO:0000255" key="1">
    <source>
        <dbReference type="HAMAP-Rule" id="MF_00583"/>
    </source>
</evidence>
<name>KPRS_BACAN</name>
<dbReference type="EC" id="2.7.6.1" evidence="1"/>
<dbReference type="EMBL" id="AE016879">
    <property type="protein sequence ID" value="AAP24104.1"/>
    <property type="molecule type" value="Genomic_DNA"/>
</dbReference>
<dbReference type="EMBL" id="AE017334">
    <property type="protein sequence ID" value="AAT29127.1"/>
    <property type="molecule type" value="Genomic_DNA"/>
</dbReference>
<dbReference type="EMBL" id="AE017225">
    <property type="protein sequence ID" value="AAT52387.1"/>
    <property type="molecule type" value="Genomic_DNA"/>
</dbReference>
<dbReference type="RefSeq" id="NP_842618.1">
    <property type="nucleotide sequence ID" value="NC_003997.3"/>
</dbReference>
<dbReference type="RefSeq" id="WP_000107420.1">
    <property type="nucleotide sequence ID" value="NZ_WXXI01000033.1"/>
</dbReference>
<dbReference type="RefSeq" id="YP_026336.1">
    <property type="nucleotide sequence ID" value="NC_005945.1"/>
</dbReference>
<dbReference type="SMR" id="Q81VZ0"/>
<dbReference type="STRING" id="261594.GBAA_0049"/>
<dbReference type="DNASU" id="1084386"/>
<dbReference type="KEGG" id="ban:BA_0049"/>
<dbReference type="KEGG" id="bar:GBAA_0049"/>
<dbReference type="KEGG" id="bat:BAS0049"/>
<dbReference type="PATRIC" id="fig|198094.11.peg.46"/>
<dbReference type="eggNOG" id="COG0462">
    <property type="taxonomic scope" value="Bacteria"/>
</dbReference>
<dbReference type="HOGENOM" id="CLU_033546_2_0_9"/>
<dbReference type="OMA" id="YFGWARQ"/>
<dbReference type="OrthoDB" id="9777067at2"/>
<dbReference type="UniPathway" id="UPA00087">
    <property type="reaction ID" value="UER00172"/>
</dbReference>
<dbReference type="Proteomes" id="UP000000427">
    <property type="component" value="Chromosome"/>
</dbReference>
<dbReference type="Proteomes" id="UP000000594">
    <property type="component" value="Chromosome"/>
</dbReference>
<dbReference type="GO" id="GO:0005737">
    <property type="term" value="C:cytoplasm"/>
    <property type="evidence" value="ECO:0007669"/>
    <property type="project" value="UniProtKB-SubCell"/>
</dbReference>
<dbReference type="GO" id="GO:0002189">
    <property type="term" value="C:ribose phosphate diphosphokinase complex"/>
    <property type="evidence" value="ECO:0007669"/>
    <property type="project" value="TreeGrafter"/>
</dbReference>
<dbReference type="GO" id="GO:0005524">
    <property type="term" value="F:ATP binding"/>
    <property type="evidence" value="ECO:0007669"/>
    <property type="project" value="UniProtKB-KW"/>
</dbReference>
<dbReference type="GO" id="GO:0016301">
    <property type="term" value="F:kinase activity"/>
    <property type="evidence" value="ECO:0007669"/>
    <property type="project" value="UniProtKB-KW"/>
</dbReference>
<dbReference type="GO" id="GO:0000287">
    <property type="term" value="F:magnesium ion binding"/>
    <property type="evidence" value="ECO:0007669"/>
    <property type="project" value="UniProtKB-UniRule"/>
</dbReference>
<dbReference type="GO" id="GO:0004749">
    <property type="term" value="F:ribose phosphate diphosphokinase activity"/>
    <property type="evidence" value="ECO:0007669"/>
    <property type="project" value="UniProtKB-UniRule"/>
</dbReference>
<dbReference type="GO" id="GO:0006015">
    <property type="term" value="P:5-phosphoribose 1-diphosphate biosynthetic process"/>
    <property type="evidence" value="ECO:0007669"/>
    <property type="project" value="UniProtKB-UniRule"/>
</dbReference>
<dbReference type="GO" id="GO:0006164">
    <property type="term" value="P:purine nucleotide biosynthetic process"/>
    <property type="evidence" value="ECO:0007669"/>
    <property type="project" value="TreeGrafter"/>
</dbReference>
<dbReference type="GO" id="GO:0009156">
    <property type="term" value="P:ribonucleoside monophosphate biosynthetic process"/>
    <property type="evidence" value="ECO:0007669"/>
    <property type="project" value="InterPro"/>
</dbReference>
<dbReference type="CDD" id="cd06223">
    <property type="entry name" value="PRTases_typeI"/>
    <property type="match status" value="1"/>
</dbReference>
<dbReference type="FunFam" id="3.40.50.2020:FF:000001">
    <property type="entry name" value="Ribose-phosphate pyrophosphokinase"/>
    <property type="match status" value="1"/>
</dbReference>
<dbReference type="FunFam" id="3.40.50.2020:FF:000005">
    <property type="entry name" value="Ribose-phosphate pyrophosphokinase 1"/>
    <property type="match status" value="1"/>
</dbReference>
<dbReference type="Gene3D" id="3.40.50.2020">
    <property type="match status" value="2"/>
</dbReference>
<dbReference type="HAMAP" id="MF_00583_B">
    <property type="entry name" value="RibP_PPkinase_B"/>
    <property type="match status" value="1"/>
</dbReference>
<dbReference type="InterPro" id="IPR000842">
    <property type="entry name" value="PRib_PP_synth_CS"/>
</dbReference>
<dbReference type="InterPro" id="IPR029099">
    <property type="entry name" value="Pribosyltran_N"/>
</dbReference>
<dbReference type="InterPro" id="IPR000836">
    <property type="entry name" value="PRibTrfase_dom"/>
</dbReference>
<dbReference type="InterPro" id="IPR029057">
    <property type="entry name" value="PRTase-like"/>
</dbReference>
<dbReference type="InterPro" id="IPR005946">
    <property type="entry name" value="Rib-P_diPkinase"/>
</dbReference>
<dbReference type="InterPro" id="IPR037515">
    <property type="entry name" value="Rib-P_diPkinase_bac"/>
</dbReference>
<dbReference type="NCBIfam" id="NF002320">
    <property type="entry name" value="PRK01259.1"/>
    <property type="match status" value="1"/>
</dbReference>
<dbReference type="NCBIfam" id="NF002618">
    <property type="entry name" value="PRK02269.1"/>
    <property type="match status" value="1"/>
</dbReference>
<dbReference type="NCBIfam" id="TIGR01251">
    <property type="entry name" value="ribP_PPkin"/>
    <property type="match status" value="1"/>
</dbReference>
<dbReference type="PANTHER" id="PTHR10210">
    <property type="entry name" value="RIBOSE-PHOSPHATE DIPHOSPHOKINASE FAMILY MEMBER"/>
    <property type="match status" value="1"/>
</dbReference>
<dbReference type="PANTHER" id="PTHR10210:SF41">
    <property type="entry name" value="RIBOSE-PHOSPHATE PYROPHOSPHOKINASE 1, CHLOROPLASTIC"/>
    <property type="match status" value="1"/>
</dbReference>
<dbReference type="Pfam" id="PF14572">
    <property type="entry name" value="Pribosyl_synth"/>
    <property type="match status" value="1"/>
</dbReference>
<dbReference type="Pfam" id="PF13793">
    <property type="entry name" value="Pribosyltran_N"/>
    <property type="match status" value="1"/>
</dbReference>
<dbReference type="SMART" id="SM01400">
    <property type="entry name" value="Pribosyltran_N"/>
    <property type="match status" value="1"/>
</dbReference>
<dbReference type="SUPFAM" id="SSF53271">
    <property type="entry name" value="PRTase-like"/>
    <property type="match status" value="1"/>
</dbReference>
<dbReference type="PROSITE" id="PS00114">
    <property type="entry name" value="PRPP_SYNTHASE"/>
    <property type="match status" value="1"/>
</dbReference>
<comment type="function">
    <text evidence="1">Involved in the biosynthesis of the central metabolite phospho-alpha-D-ribosyl-1-pyrophosphate (PRPP) via the transfer of pyrophosphoryl group from ATP to 1-hydroxyl of ribose-5-phosphate (Rib-5-P).</text>
</comment>
<comment type="catalytic activity">
    <reaction evidence="1">
        <text>D-ribose 5-phosphate + ATP = 5-phospho-alpha-D-ribose 1-diphosphate + AMP + H(+)</text>
        <dbReference type="Rhea" id="RHEA:15609"/>
        <dbReference type="ChEBI" id="CHEBI:15378"/>
        <dbReference type="ChEBI" id="CHEBI:30616"/>
        <dbReference type="ChEBI" id="CHEBI:58017"/>
        <dbReference type="ChEBI" id="CHEBI:78346"/>
        <dbReference type="ChEBI" id="CHEBI:456215"/>
        <dbReference type="EC" id="2.7.6.1"/>
    </reaction>
</comment>
<comment type="cofactor">
    <cofactor evidence="1">
        <name>Mg(2+)</name>
        <dbReference type="ChEBI" id="CHEBI:18420"/>
    </cofactor>
    <text evidence="1">Binds 2 Mg(2+) ions per subunit.</text>
</comment>
<comment type="pathway">
    <text evidence="1">Metabolic intermediate biosynthesis; 5-phospho-alpha-D-ribose 1-diphosphate biosynthesis; 5-phospho-alpha-D-ribose 1-diphosphate from D-ribose 5-phosphate (route I): step 1/1.</text>
</comment>
<comment type="subunit">
    <text evidence="1">Homohexamer.</text>
</comment>
<comment type="subcellular location">
    <subcellularLocation>
        <location evidence="1">Cytoplasm</location>
    </subcellularLocation>
</comment>
<comment type="similarity">
    <text evidence="1">Belongs to the ribose-phosphate pyrophosphokinase family. Class I subfamily.</text>
</comment>